<proteinExistence type="evidence at protein level"/>
<evidence type="ECO:0000250" key="1">
    <source>
        <dbReference type="UniProtKB" id="P61541"/>
    </source>
</evidence>
<evidence type="ECO:0000255" key="2"/>
<evidence type="ECO:0000269" key="3">
    <source>
    </source>
</evidence>
<evidence type="ECO:0000303" key="4">
    <source>
    </source>
</evidence>
<evidence type="ECO:0000303" key="5">
    <source>
    </source>
</evidence>
<evidence type="ECO:0000305" key="6"/>
<feature type="chain" id="PRO_0000415949" description="Delta-actitoxin-Ael2d" evidence="3">
    <location>
        <begin position="1"/>
        <end position="42"/>
    </location>
</feature>
<feature type="disulfide bond" evidence="1">
    <location>
        <begin position="4"/>
        <end position="37"/>
    </location>
</feature>
<feature type="disulfide bond" evidence="1">
    <location>
        <begin position="6"/>
        <end position="30"/>
    </location>
</feature>
<feature type="disulfide bond" evidence="1">
    <location>
        <begin position="20"/>
        <end position="38"/>
    </location>
</feature>
<sequence>GTPCYCGKTIGIYWFGTKTCPSNRGYTGSCGYFLGICCYPVD</sequence>
<dbReference type="SMR" id="B3EWF9"/>
<dbReference type="GO" id="GO:0005576">
    <property type="term" value="C:extracellular region"/>
    <property type="evidence" value="ECO:0007669"/>
    <property type="project" value="UniProtKB-SubCell"/>
</dbReference>
<dbReference type="GO" id="GO:0042151">
    <property type="term" value="C:nematocyst"/>
    <property type="evidence" value="ECO:0007669"/>
    <property type="project" value="UniProtKB-SubCell"/>
</dbReference>
<dbReference type="GO" id="GO:0008200">
    <property type="term" value="F:ion channel inhibitor activity"/>
    <property type="evidence" value="ECO:0007669"/>
    <property type="project" value="InterPro"/>
</dbReference>
<dbReference type="GO" id="GO:0017080">
    <property type="term" value="F:sodium channel regulator activity"/>
    <property type="evidence" value="ECO:0007669"/>
    <property type="project" value="UniProtKB-KW"/>
</dbReference>
<dbReference type="GO" id="GO:0090729">
    <property type="term" value="F:toxin activity"/>
    <property type="evidence" value="ECO:0007669"/>
    <property type="project" value="UniProtKB-KW"/>
</dbReference>
<dbReference type="Gene3D" id="2.20.20.10">
    <property type="entry name" value="Anthopleurin-A"/>
    <property type="match status" value="1"/>
</dbReference>
<dbReference type="InterPro" id="IPR012414">
    <property type="entry name" value="BDS_K_chnl_tox"/>
</dbReference>
<dbReference type="InterPro" id="IPR023355">
    <property type="entry name" value="Myo_ane_neurotoxin_sf"/>
</dbReference>
<dbReference type="Pfam" id="PF07936">
    <property type="entry name" value="Defensin_4"/>
    <property type="match status" value="1"/>
</dbReference>
<dbReference type="SUPFAM" id="SSF57392">
    <property type="entry name" value="Defensin-like"/>
    <property type="match status" value="1"/>
</dbReference>
<name>BDS3_ANTEL</name>
<protein>
    <recommendedName>
        <fullName evidence="4">Delta-actitoxin-Ael2d</fullName>
        <shortName evidence="4">Delta-AITX-Ael2d</shortName>
    </recommendedName>
    <alternativeName>
        <fullName evidence="5">Toxin APETx3</fullName>
    </alternativeName>
</protein>
<comment type="function">
    <text evidence="3">Binds to voltage-gated sodium channels (Nav), and slows down the inactivation of mammalian Nav1.2/SCN2A, Nav1.3/SCN3A Nav1.4/SCN4A, Nav1.6/SCN8A, insect DmNav1 and BgNav1 channels, and arachnid VdNav1 channel (PubMed:22972919). This toxin acts by binding to site 3 of sodium channels.</text>
</comment>
<comment type="subcellular location">
    <subcellularLocation>
        <location evidence="3 6">Secreted</location>
    </subcellularLocation>
    <subcellularLocation>
        <location evidence="3 6">Nematocyst</location>
    </subcellularLocation>
</comment>
<comment type="domain">
    <text evidence="1">Has the CSbeta/beta fold, which comprises anti-parallel beta-sheets stabilized by three or four disulfide bonds.</text>
</comment>
<comment type="mass spectrometry"/>
<comment type="miscellaneous">
    <text evidence="3">Negative results: has no effect on Nav1.5, Nav1.7 and Nav1.8 sodium channels and on Kv1.1, Kv1.2, Kv1.3, Kv1.4, Kv1.5, Kv1.6, Kv2.1, Kv3.1, Kv4.2, Kv4.3, Kv7.2, Kv7.4, Kv11.1/KCNH2/ERG1, and Shaker potassium channels.</text>
</comment>
<comment type="similarity">
    <text evidence="2">Belongs to the sea anemone type 3 (BDS) potassium channel toxin family.</text>
</comment>
<reference key="1">
    <citation type="journal article" date="2012" name="FASEB J.">
        <title>A natural point mutation changes both target selectivity and mechanism of action of sea anemone toxins.</title>
        <authorList>
            <person name="Peigneur S."/>
            <person name="Beress L."/>
            <person name="Moeller C."/>
            <person name="Mari F."/>
            <person name="Forssmann W.G."/>
            <person name="Tytgat J."/>
        </authorList>
    </citation>
    <scope>PROTEIN SEQUENCE</scope>
    <scope>FUNCTION</scope>
    <scope>SUBCELLULAR LOCATION</scope>
    <scope>MASS SPECTROMETRY</scope>
    <source>
        <tissue>Venom</tissue>
    </source>
</reference>
<reference key="2">
    <citation type="journal article" date="2012" name="Toxicon">
        <title>Development of a rational nomenclature for naming peptide and protein toxins from sea anemones.</title>
        <authorList>
            <person name="Oliveira J.S."/>
            <person name="Fuentes-Silva D."/>
            <person name="King G.F."/>
        </authorList>
    </citation>
    <scope>NOMENCLATURE</scope>
</reference>
<keyword id="KW-0903">Direct protein sequencing</keyword>
<keyword id="KW-1015">Disulfide bond</keyword>
<keyword id="KW-0872">Ion channel impairing toxin</keyword>
<keyword id="KW-0166">Nematocyst</keyword>
<keyword id="KW-0528">Neurotoxin</keyword>
<keyword id="KW-0964">Secreted</keyword>
<keyword id="KW-0800">Toxin</keyword>
<keyword id="KW-0738">Voltage-gated sodium channel impairing toxin</keyword>
<organism>
    <name type="scientific">Anthopleura elegantissima</name>
    <name type="common">Green aggregating anemone</name>
    <name type="synonym">Actinia elegantissima</name>
    <dbReference type="NCBI Taxonomy" id="6110"/>
    <lineage>
        <taxon>Eukaryota</taxon>
        <taxon>Metazoa</taxon>
        <taxon>Cnidaria</taxon>
        <taxon>Anthozoa</taxon>
        <taxon>Hexacorallia</taxon>
        <taxon>Actiniaria</taxon>
        <taxon>Actiniidae</taxon>
        <taxon>Anthopleura</taxon>
    </lineage>
</organism>
<accession>B3EWF9</accession>